<protein>
    <recommendedName>
        <fullName evidence="1">Probable dual-specificity RNA methyltransferase RlmN</fullName>
        <ecNumber evidence="1">2.1.1.192</ecNumber>
    </recommendedName>
    <alternativeName>
        <fullName evidence="1">23S rRNA (adenine(2503)-C(2))-methyltransferase</fullName>
    </alternativeName>
    <alternativeName>
        <fullName evidence="1">23S rRNA m2A2503 methyltransferase</fullName>
    </alternativeName>
    <alternativeName>
        <fullName evidence="1">Ribosomal RNA large subunit methyltransferase N</fullName>
    </alternativeName>
    <alternativeName>
        <fullName evidence="1">tRNA (adenine(37)-C(2))-methyltransferase</fullName>
    </alternativeName>
    <alternativeName>
        <fullName evidence="1">tRNA m2A37 methyltransferase</fullName>
    </alternativeName>
</protein>
<organism>
    <name type="scientific">Chlorobium phaeovibrioides (strain DSM 265 / 1930)</name>
    <name type="common">Prosthecochloris vibrioformis (strain DSM 265)</name>
    <dbReference type="NCBI Taxonomy" id="290318"/>
    <lineage>
        <taxon>Bacteria</taxon>
        <taxon>Pseudomonadati</taxon>
        <taxon>Chlorobiota</taxon>
        <taxon>Chlorobiia</taxon>
        <taxon>Chlorobiales</taxon>
        <taxon>Chlorobiaceae</taxon>
        <taxon>Chlorobium/Pelodictyon group</taxon>
        <taxon>Chlorobium</taxon>
    </lineage>
</organism>
<accession>A4SEQ5</accession>
<evidence type="ECO:0000255" key="1">
    <source>
        <dbReference type="HAMAP-Rule" id="MF_01849"/>
    </source>
</evidence>
<evidence type="ECO:0000255" key="2">
    <source>
        <dbReference type="PROSITE-ProRule" id="PRU01266"/>
    </source>
</evidence>
<reference key="1">
    <citation type="submission" date="2007-03" db="EMBL/GenBank/DDBJ databases">
        <title>Complete sequence of Prosthecochloris vibrioformis DSM 265.</title>
        <authorList>
            <consortium name="US DOE Joint Genome Institute"/>
            <person name="Copeland A."/>
            <person name="Lucas S."/>
            <person name="Lapidus A."/>
            <person name="Barry K."/>
            <person name="Detter J.C."/>
            <person name="Glavina del Rio T."/>
            <person name="Hammon N."/>
            <person name="Israni S."/>
            <person name="Pitluck S."/>
            <person name="Schmutz J."/>
            <person name="Larimer F."/>
            <person name="Land M."/>
            <person name="Hauser L."/>
            <person name="Mikhailova N."/>
            <person name="Li T."/>
            <person name="Overmann J."/>
            <person name="Schuster S.C."/>
            <person name="Bryant D.A."/>
            <person name="Richardson P."/>
        </authorList>
    </citation>
    <scope>NUCLEOTIDE SEQUENCE [LARGE SCALE GENOMIC DNA]</scope>
    <source>
        <strain>DSM 265 / 1930</strain>
    </source>
</reference>
<dbReference type="EC" id="2.1.1.192" evidence="1"/>
<dbReference type="EMBL" id="CP000607">
    <property type="protein sequence ID" value="ABP36964.1"/>
    <property type="molecule type" value="Genomic_DNA"/>
</dbReference>
<dbReference type="SMR" id="A4SEQ5"/>
<dbReference type="STRING" id="290318.Cvib_0950"/>
<dbReference type="KEGG" id="pvi:Cvib_0950"/>
<dbReference type="eggNOG" id="COG0820">
    <property type="taxonomic scope" value="Bacteria"/>
</dbReference>
<dbReference type="HOGENOM" id="CLU_029101_0_0_10"/>
<dbReference type="OrthoDB" id="9793973at2"/>
<dbReference type="GO" id="GO:0005737">
    <property type="term" value="C:cytoplasm"/>
    <property type="evidence" value="ECO:0007669"/>
    <property type="project" value="UniProtKB-SubCell"/>
</dbReference>
<dbReference type="GO" id="GO:0051539">
    <property type="term" value="F:4 iron, 4 sulfur cluster binding"/>
    <property type="evidence" value="ECO:0007669"/>
    <property type="project" value="UniProtKB-UniRule"/>
</dbReference>
<dbReference type="GO" id="GO:0046872">
    <property type="term" value="F:metal ion binding"/>
    <property type="evidence" value="ECO:0007669"/>
    <property type="project" value="UniProtKB-KW"/>
</dbReference>
<dbReference type="GO" id="GO:0070040">
    <property type="term" value="F:rRNA (adenine(2503)-C2-)-methyltransferase activity"/>
    <property type="evidence" value="ECO:0007669"/>
    <property type="project" value="UniProtKB-UniRule"/>
</dbReference>
<dbReference type="GO" id="GO:0019843">
    <property type="term" value="F:rRNA binding"/>
    <property type="evidence" value="ECO:0007669"/>
    <property type="project" value="UniProtKB-UniRule"/>
</dbReference>
<dbReference type="GO" id="GO:0002935">
    <property type="term" value="F:tRNA (adenine(37)-C2)-methyltransferase activity"/>
    <property type="evidence" value="ECO:0007669"/>
    <property type="project" value="UniProtKB-UniRule"/>
</dbReference>
<dbReference type="GO" id="GO:0000049">
    <property type="term" value="F:tRNA binding"/>
    <property type="evidence" value="ECO:0007669"/>
    <property type="project" value="UniProtKB-UniRule"/>
</dbReference>
<dbReference type="GO" id="GO:0070475">
    <property type="term" value="P:rRNA base methylation"/>
    <property type="evidence" value="ECO:0007669"/>
    <property type="project" value="UniProtKB-UniRule"/>
</dbReference>
<dbReference type="GO" id="GO:0030488">
    <property type="term" value="P:tRNA methylation"/>
    <property type="evidence" value="ECO:0007669"/>
    <property type="project" value="UniProtKB-UniRule"/>
</dbReference>
<dbReference type="CDD" id="cd01335">
    <property type="entry name" value="Radical_SAM"/>
    <property type="match status" value="1"/>
</dbReference>
<dbReference type="Gene3D" id="1.10.150.530">
    <property type="match status" value="1"/>
</dbReference>
<dbReference type="Gene3D" id="3.20.20.70">
    <property type="entry name" value="Aldolase class I"/>
    <property type="match status" value="1"/>
</dbReference>
<dbReference type="HAMAP" id="MF_01849">
    <property type="entry name" value="RNA_methyltr_RlmN"/>
    <property type="match status" value="1"/>
</dbReference>
<dbReference type="InterPro" id="IPR013785">
    <property type="entry name" value="Aldolase_TIM"/>
</dbReference>
<dbReference type="InterPro" id="IPR040072">
    <property type="entry name" value="Methyltransferase_A"/>
</dbReference>
<dbReference type="InterPro" id="IPR048641">
    <property type="entry name" value="RlmN_N"/>
</dbReference>
<dbReference type="InterPro" id="IPR027492">
    <property type="entry name" value="RNA_MTrfase_RlmN"/>
</dbReference>
<dbReference type="InterPro" id="IPR004383">
    <property type="entry name" value="rRNA_lsu_MTrfase_RlmN/Cfr"/>
</dbReference>
<dbReference type="InterPro" id="IPR007197">
    <property type="entry name" value="rSAM"/>
</dbReference>
<dbReference type="NCBIfam" id="TIGR00048">
    <property type="entry name" value="rRNA_mod_RlmN"/>
    <property type="match status" value="1"/>
</dbReference>
<dbReference type="PANTHER" id="PTHR30544">
    <property type="entry name" value="23S RRNA METHYLTRANSFERASE"/>
    <property type="match status" value="1"/>
</dbReference>
<dbReference type="PANTHER" id="PTHR30544:SF5">
    <property type="entry name" value="RADICAL SAM CORE DOMAIN-CONTAINING PROTEIN"/>
    <property type="match status" value="1"/>
</dbReference>
<dbReference type="Pfam" id="PF04055">
    <property type="entry name" value="Radical_SAM"/>
    <property type="match status" value="1"/>
</dbReference>
<dbReference type="Pfam" id="PF21016">
    <property type="entry name" value="RlmN_N"/>
    <property type="match status" value="1"/>
</dbReference>
<dbReference type="PIRSF" id="PIRSF006004">
    <property type="entry name" value="CHP00048"/>
    <property type="match status" value="1"/>
</dbReference>
<dbReference type="SFLD" id="SFLDF00275">
    <property type="entry name" value="adenosine_C2_methyltransferase"/>
    <property type="match status" value="1"/>
</dbReference>
<dbReference type="SFLD" id="SFLDS00029">
    <property type="entry name" value="Radical_SAM"/>
    <property type="match status" value="1"/>
</dbReference>
<dbReference type="SUPFAM" id="SSF102114">
    <property type="entry name" value="Radical SAM enzymes"/>
    <property type="match status" value="1"/>
</dbReference>
<dbReference type="PROSITE" id="PS51918">
    <property type="entry name" value="RADICAL_SAM"/>
    <property type="match status" value="1"/>
</dbReference>
<comment type="function">
    <text evidence="1">Specifically methylates position 2 of adenine 2503 in 23S rRNA and position 2 of adenine 37 in tRNAs.</text>
</comment>
<comment type="catalytic activity">
    <reaction evidence="1">
        <text>adenosine(2503) in 23S rRNA + 2 reduced [2Fe-2S]-[ferredoxin] + 2 S-adenosyl-L-methionine = 2-methyladenosine(2503) in 23S rRNA + 5'-deoxyadenosine + L-methionine + 2 oxidized [2Fe-2S]-[ferredoxin] + S-adenosyl-L-homocysteine</text>
        <dbReference type="Rhea" id="RHEA:42916"/>
        <dbReference type="Rhea" id="RHEA-COMP:10000"/>
        <dbReference type="Rhea" id="RHEA-COMP:10001"/>
        <dbReference type="Rhea" id="RHEA-COMP:10152"/>
        <dbReference type="Rhea" id="RHEA-COMP:10282"/>
        <dbReference type="ChEBI" id="CHEBI:17319"/>
        <dbReference type="ChEBI" id="CHEBI:33737"/>
        <dbReference type="ChEBI" id="CHEBI:33738"/>
        <dbReference type="ChEBI" id="CHEBI:57844"/>
        <dbReference type="ChEBI" id="CHEBI:57856"/>
        <dbReference type="ChEBI" id="CHEBI:59789"/>
        <dbReference type="ChEBI" id="CHEBI:74411"/>
        <dbReference type="ChEBI" id="CHEBI:74497"/>
        <dbReference type="EC" id="2.1.1.192"/>
    </reaction>
</comment>
<comment type="catalytic activity">
    <reaction evidence="1">
        <text>adenosine(37) in tRNA + 2 reduced [2Fe-2S]-[ferredoxin] + 2 S-adenosyl-L-methionine = 2-methyladenosine(37) in tRNA + 5'-deoxyadenosine + L-methionine + 2 oxidized [2Fe-2S]-[ferredoxin] + S-adenosyl-L-homocysteine</text>
        <dbReference type="Rhea" id="RHEA:43332"/>
        <dbReference type="Rhea" id="RHEA-COMP:10000"/>
        <dbReference type="Rhea" id="RHEA-COMP:10001"/>
        <dbReference type="Rhea" id="RHEA-COMP:10162"/>
        <dbReference type="Rhea" id="RHEA-COMP:10485"/>
        <dbReference type="ChEBI" id="CHEBI:17319"/>
        <dbReference type="ChEBI" id="CHEBI:33737"/>
        <dbReference type="ChEBI" id="CHEBI:33738"/>
        <dbReference type="ChEBI" id="CHEBI:57844"/>
        <dbReference type="ChEBI" id="CHEBI:57856"/>
        <dbReference type="ChEBI" id="CHEBI:59789"/>
        <dbReference type="ChEBI" id="CHEBI:74411"/>
        <dbReference type="ChEBI" id="CHEBI:74497"/>
        <dbReference type="EC" id="2.1.1.192"/>
    </reaction>
</comment>
<comment type="cofactor">
    <cofactor evidence="1">
        <name>[4Fe-4S] cluster</name>
        <dbReference type="ChEBI" id="CHEBI:49883"/>
    </cofactor>
    <text evidence="1">Binds 1 [4Fe-4S] cluster. The cluster is coordinated with 3 cysteines and an exchangeable S-adenosyl-L-methionine.</text>
</comment>
<comment type="subcellular location">
    <subcellularLocation>
        <location evidence="1">Cytoplasm</location>
    </subcellularLocation>
</comment>
<comment type="miscellaneous">
    <text evidence="1">Reaction proceeds by a ping-pong mechanism involving intermediate methylation of a conserved cysteine residue.</text>
</comment>
<comment type="similarity">
    <text evidence="1">Belongs to the radical SAM superfamily. RlmN family.</text>
</comment>
<proteinExistence type="inferred from homology"/>
<name>RLMN_CHLPM</name>
<gene>
    <name evidence="1" type="primary">rlmN</name>
    <name type="ordered locus">Cvib_0950</name>
</gene>
<sequence length="373" mass="41064">MRSPQTSEKTHTMAKTLQNITDLTLQQLTGRLAEMKEPAWRAKQIHEWLFSHRAESFEEMTTLSKALRKALEETFAITPPEVEQHDNSTEGACPGPTEKLLLRLPDGAMIETVLIPGPGRLTACLSSQAGCALQCSFCATGSLGFKRNLTPGEITGQANALNSMLAASGREQKITNIVFMGMGEPLLNTLNVFDAVETLSTRGYTSSISQRKITISTVGIIPEIAKLATSGMKTKLAVSLHSAFQEKRESLMPLAARRYPLDELQPVLAHYAKNTGEPVTLVYMLLEGVNDTLEDARQLIRFASRFFCKINLIDYNSIVNIPFQSVCSETRDRFRDRLLEAGLQVTLRKSYGTSIHAACGQLAAKGMEHSNKS</sequence>
<keyword id="KW-0004">4Fe-4S</keyword>
<keyword id="KW-0963">Cytoplasm</keyword>
<keyword id="KW-1015">Disulfide bond</keyword>
<keyword id="KW-0408">Iron</keyword>
<keyword id="KW-0411">Iron-sulfur</keyword>
<keyword id="KW-0479">Metal-binding</keyword>
<keyword id="KW-0489">Methyltransferase</keyword>
<keyword id="KW-0698">rRNA processing</keyword>
<keyword id="KW-0949">S-adenosyl-L-methionine</keyword>
<keyword id="KW-0808">Transferase</keyword>
<keyword id="KW-0819">tRNA processing</keyword>
<feature type="chain" id="PRO_0000350325" description="Probable dual-specificity RNA methyltransferase RlmN">
    <location>
        <begin position="1"/>
        <end position="373"/>
    </location>
</feature>
<feature type="domain" description="Radical SAM core" evidence="2">
    <location>
        <begin position="117"/>
        <end position="356"/>
    </location>
</feature>
<feature type="active site" description="Proton acceptor" evidence="1">
    <location>
        <position position="111"/>
    </location>
</feature>
<feature type="active site" description="S-methylcysteine intermediate" evidence="1">
    <location>
        <position position="359"/>
    </location>
</feature>
<feature type="binding site" evidence="1">
    <location>
        <position position="131"/>
    </location>
    <ligand>
        <name>[4Fe-4S] cluster</name>
        <dbReference type="ChEBI" id="CHEBI:49883"/>
        <note>4Fe-4S-S-AdoMet</note>
    </ligand>
</feature>
<feature type="binding site" evidence="1">
    <location>
        <position position="135"/>
    </location>
    <ligand>
        <name>[4Fe-4S] cluster</name>
        <dbReference type="ChEBI" id="CHEBI:49883"/>
        <note>4Fe-4S-S-AdoMet</note>
    </ligand>
</feature>
<feature type="binding site" evidence="1">
    <location>
        <position position="138"/>
    </location>
    <ligand>
        <name>[4Fe-4S] cluster</name>
        <dbReference type="ChEBI" id="CHEBI:49883"/>
        <note>4Fe-4S-S-AdoMet</note>
    </ligand>
</feature>
<feature type="binding site" evidence="1">
    <location>
        <begin position="183"/>
        <end position="184"/>
    </location>
    <ligand>
        <name>S-adenosyl-L-methionine</name>
        <dbReference type="ChEBI" id="CHEBI:59789"/>
    </ligand>
</feature>
<feature type="binding site" evidence="1">
    <location>
        <position position="216"/>
    </location>
    <ligand>
        <name>S-adenosyl-L-methionine</name>
        <dbReference type="ChEBI" id="CHEBI:59789"/>
    </ligand>
</feature>
<feature type="binding site" evidence="1">
    <location>
        <begin position="239"/>
        <end position="241"/>
    </location>
    <ligand>
        <name>S-adenosyl-L-methionine</name>
        <dbReference type="ChEBI" id="CHEBI:59789"/>
    </ligand>
</feature>
<feature type="binding site" evidence="1">
    <location>
        <position position="316"/>
    </location>
    <ligand>
        <name>S-adenosyl-L-methionine</name>
        <dbReference type="ChEBI" id="CHEBI:59789"/>
    </ligand>
</feature>
<feature type="disulfide bond" description="(transient)" evidence="1">
    <location>
        <begin position="124"/>
        <end position="359"/>
    </location>
</feature>